<accession>Q10YG4</accession>
<gene>
    <name evidence="1" type="primary">mutS</name>
    <name type="ordered locus">Tery_3645</name>
</gene>
<sequence length="901" mass="100977">MKYSASTSTPKSAQPKEEELENSLPTNADYSKIDVSKLSEMMQRYVEVKQQYSHALLLFRVGDFFECFFQDAVTIAQELELVQTTKHAGKEIGRVPMTGVPHHAVEKYATFLVEKGYAVVVCDQVEDSAIAKKENRQVKREITRILTPGTLTDDGMLKARYNNYLAAVVIAKNYWGLAYTDISTGEFLTTQTEGLDQLTQELMRLQPSEVLFPTKAPDIGFMLRPGERSDHLPEYLPHSFCYSLRPQQPFSLGEAKERLLMKFQLASLEGLGCERLPLGVRAAGGLLEYLEETQKENQVPLQRLRSYTLADFLILDHQSRRNLEITQTVRDGSYQGSLLSVVDKTSTAMGGRALRRWLQQPLLSLKGIRARHDTIDELIQNNDLRQDIQRVLRQIYDLERLTGRTGAGTANARDLVFLADSLTKLPELSTFVSQGNSPYLKVLQKIPPILQELGKKIHSNLVESPSQKLKEGGLIRPGINERLDEMRKLAEEDQKWIASLETTERERTGIPNLKVGYNKAFGYYISISKSKANLAPDDYTRKQTLTNEERYITEELKEREVRILTAQDDLNELEYDIFVDLRNEVGEYAEEIRNVSRAVAALDILCGLADVAIYQNYVRPTMVDSRELKIIEGRHPVVEKYLPAGFFVPNTAILGSKNLEKNNSGITPYSAPDLIILTGPNASGKSCYLRQVGLIQLMAQIGSFVPASSAVLGVSDRIFTRVGAVDDLATGQSTFMVEMNETANILNHATEKSLVLLDEIGRGTATFDGISIAWSVAEYLATEILSRTIFATHYHELNELSSILDNVANYQVTVKELPDKIVFLHQVQPGGADKSYGIEAGRLAGLPDSVIARARQVMQQIENHSKIAIGLRKGINKKEEEEIITVEQLDIFSEEFGDSLL</sequence>
<organism>
    <name type="scientific">Trichodesmium erythraeum (strain IMS101)</name>
    <dbReference type="NCBI Taxonomy" id="203124"/>
    <lineage>
        <taxon>Bacteria</taxon>
        <taxon>Bacillati</taxon>
        <taxon>Cyanobacteriota</taxon>
        <taxon>Cyanophyceae</taxon>
        <taxon>Oscillatoriophycideae</taxon>
        <taxon>Oscillatoriales</taxon>
        <taxon>Microcoleaceae</taxon>
        <taxon>Trichodesmium</taxon>
    </lineage>
</organism>
<reference key="1">
    <citation type="journal article" date="2015" name="Proc. Natl. Acad. Sci. U.S.A.">
        <title>Trichodesmium genome maintains abundant, widespread noncoding DNA in situ, despite oligotrophic lifestyle.</title>
        <authorList>
            <person name="Walworth N."/>
            <person name="Pfreundt U."/>
            <person name="Nelson W.C."/>
            <person name="Mincer T."/>
            <person name="Heidelberg J.F."/>
            <person name="Fu F."/>
            <person name="Waterbury J.B."/>
            <person name="Glavina del Rio T."/>
            <person name="Goodwin L."/>
            <person name="Kyrpides N.C."/>
            <person name="Land M.L."/>
            <person name="Woyke T."/>
            <person name="Hutchins D.A."/>
            <person name="Hess W.R."/>
            <person name="Webb E.A."/>
        </authorList>
    </citation>
    <scope>NUCLEOTIDE SEQUENCE [LARGE SCALE GENOMIC DNA]</scope>
    <source>
        <strain>IMS101</strain>
    </source>
</reference>
<feature type="chain" id="PRO_0000335240" description="DNA mismatch repair protein MutS">
    <location>
        <begin position="1"/>
        <end position="901"/>
    </location>
</feature>
<feature type="region of interest" description="Disordered" evidence="2">
    <location>
        <begin position="1"/>
        <end position="25"/>
    </location>
</feature>
<feature type="compositionally biased region" description="Polar residues" evidence="2">
    <location>
        <begin position="1"/>
        <end position="12"/>
    </location>
</feature>
<feature type="binding site" evidence="1">
    <location>
        <begin position="679"/>
        <end position="686"/>
    </location>
    <ligand>
        <name>ATP</name>
        <dbReference type="ChEBI" id="CHEBI:30616"/>
    </ligand>
</feature>
<evidence type="ECO:0000255" key="1">
    <source>
        <dbReference type="HAMAP-Rule" id="MF_00096"/>
    </source>
</evidence>
<evidence type="ECO:0000256" key="2">
    <source>
        <dbReference type="SAM" id="MobiDB-lite"/>
    </source>
</evidence>
<protein>
    <recommendedName>
        <fullName evidence="1">DNA mismatch repair protein MutS</fullName>
    </recommendedName>
</protein>
<keyword id="KW-0067">ATP-binding</keyword>
<keyword id="KW-0227">DNA damage</keyword>
<keyword id="KW-0234">DNA repair</keyword>
<keyword id="KW-0238">DNA-binding</keyword>
<keyword id="KW-0547">Nucleotide-binding</keyword>
<comment type="function">
    <text evidence="1">This protein is involved in the repair of mismatches in DNA. It is possible that it carries out the mismatch recognition step. This protein has a weak ATPase activity.</text>
</comment>
<comment type="similarity">
    <text evidence="1">Belongs to the DNA mismatch repair MutS family.</text>
</comment>
<name>MUTS_TRIEI</name>
<dbReference type="EMBL" id="CP000393">
    <property type="protein sequence ID" value="ABG52710.1"/>
    <property type="molecule type" value="Genomic_DNA"/>
</dbReference>
<dbReference type="RefSeq" id="WP_011613042.1">
    <property type="nucleotide sequence ID" value="NC_008312.1"/>
</dbReference>
<dbReference type="SMR" id="Q10YG4"/>
<dbReference type="STRING" id="203124.Tery_3645"/>
<dbReference type="KEGG" id="ter:Tery_3645"/>
<dbReference type="eggNOG" id="COG0249">
    <property type="taxonomic scope" value="Bacteria"/>
</dbReference>
<dbReference type="HOGENOM" id="CLU_002472_3_1_3"/>
<dbReference type="GO" id="GO:0005829">
    <property type="term" value="C:cytosol"/>
    <property type="evidence" value="ECO:0007669"/>
    <property type="project" value="TreeGrafter"/>
</dbReference>
<dbReference type="GO" id="GO:0005524">
    <property type="term" value="F:ATP binding"/>
    <property type="evidence" value="ECO:0007669"/>
    <property type="project" value="UniProtKB-UniRule"/>
</dbReference>
<dbReference type="GO" id="GO:0140664">
    <property type="term" value="F:ATP-dependent DNA damage sensor activity"/>
    <property type="evidence" value="ECO:0007669"/>
    <property type="project" value="InterPro"/>
</dbReference>
<dbReference type="GO" id="GO:0003684">
    <property type="term" value="F:damaged DNA binding"/>
    <property type="evidence" value="ECO:0007669"/>
    <property type="project" value="UniProtKB-UniRule"/>
</dbReference>
<dbReference type="GO" id="GO:0030983">
    <property type="term" value="F:mismatched DNA binding"/>
    <property type="evidence" value="ECO:0007669"/>
    <property type="project" value="InterPro"/>
</dbReference>
<dbReference type="GO" id="GO:0006298">
    <property type="term" value="P:mismatch repair"/>
    <property type="evidence" value="ECO:0007669"/>
    <property type="project" value="UniProtKB-UniRule"/>
</dbReference>
<dbReference type="CDD" id="cd03284">
    <property type="entry name" value="ABC_MutS1"/>
    <property type="match status" value="1"/>
</dbReference>
<dbReference type="FunFam" id="1.10.1420.10:FF:000001">
    <property type="entry name" value="DNA mismatch repair protein MutS"/>
    <property type="match status" value="1"/>
</dbReference>
<dbReference type="FunFam" id="3.40.50.300:FF:000870">
    <property type="entry name" value="MutS protein homolog 4"/>
    <property type="match status" value="1"/>
</dbReference>
<dbReference type="Gene3D" id="1.10.1420.10">
    <property type="match status" value="2"/>
</dbReference>
<dbReference type="Gene3D" id="3.40.1170.10">
    <property type="entry name" value="DNA repair protein MutS, domain I"/>
    <property type="match status" value="1"/>
</dbReference>
<dbReference type="Gene3D" id="3.30.420.110">
    <property type="entry name" value="MutS, connector domain"/>
    <property type="match status" value="1"/>
</dbReference>
<dbReference type="Gene3D" id="3.40.50.300">
    <property type="entry name" value="P-loop containing nucleotide triphosphate hydrolases"/>
    <property type="match status" value="1"/>
</dbReference>
<dbReference type="HAMAP" id="MF_00096">
    <property type="entry name" value="MutS"/>
    <property type="match status" value="1"/>
</dbReference>
<dbReference type="InterPro" id="IPR005748">
    <property type="entry name" value="DNA_mismatch_repair_MutS"/>
</dbReference>
<dbReference type="InterPro" id="IPR007695">
    <property type="entry name" value="DNA_mismatch_repair_MutS-lik_N"/>
</dbReference>
<dbReference type="InterPro" id="IPR017261">
    <property type="entry name" value="DNA_mismatch_repair_MutS/MSH"/>
</dbReference>
<dbReference type="InterPro" id="IPR000432">
    <property type="entry name" value="DNA_mismatch_repair_MutS_C"/>
</dbReference>
<dbReference type="InterPro" id="IPR007861">
    <property type="entry name" value="DNA_mismatch_repair_MutS_clamp"/>
</dbReference>
<dbReference type="InterPro" id="IPR007696">
    <property type="entry name" value="DNA_mismatch_repair_MutS_core"/>
</dbReference>
<dbReference type="InterPro" id="IPR016151">
    <property type="entry name" value="DNA_mismatch_repair_MutS_N"/>
</dbReference>
<dbReference type="InterPro" id="IPR036187">
    <property type="entry name" value="DNA_mismatch_repair_MutS_sf"/>
</dbReference>
<dbReference type="InterPro" id="IPR007860">
    <property type="entry name" value="DNA_mmatch_repair_MutS_con_dom"/>
</dbReference>
<dbReference type="InterPro" id="IPR045076">
    <property type="entry name" value="MutS"/>
</dbReference>
<dbReference type="InterPro" id="IPR036678">
    <property type="entry name" value="MutS_con_dom_sf"/>
</dbReference>
<dbReference type="InterPro" id="IPR027417">
    <property type="entry name" value="P-loop_NTPase"/>
</dbReference>
<dbReference type="NCBIfam" id="TIGR01070">
    <property type="entry name" value="mutS1"/>
    <property type="match status" value="1"/>
</dbReference>
<dbReference type="NCBIfam" id="NF003810">
    <property type="entry name" value="PRK05399.1"/>
    <property type="match status" value="1"/>
</dbReference>
<dbReference type="PANTHER" id="PTHR11361:SF34">
    <property type="entry name" value="DNA MISMATCH REPAIR PROTEIN MSH1, MITOCHONDRIAL"/>
    <property type="match status" value="1"/>
</dbReference>
<dbReference type="PANTHER" id="PTHR11361">
    <property type="entry name" value="DNA MISMATCH REPAIR PROTEIN MUTS FAMILY MEMBER"/>
    <property type="match status" value="1"/>
</dbReference>
<dbReference type="Pfam" id="PF01624">
    <property type="entry name" value="MutS_I"/>
    <property type="match status" value="1"/>
</dbReference>
<dbReference type="Pfam" id="PF05188">
    <property type="entry name" value="MutS_II"/>
    <property type="match status" value="1"/>
</dbReference>
<dbReference type="Pfam" id="PF05192">
    <property type="entry name" value="MutS_III"/>
    <property type="match status" value="1"/>
</dbReference>
<dbReference type="Pfam" id="PF05190">
    <property type="entry name" value="MutS_IV"/>
    <property type="match status" value="1"/>
</dbReference>
<dbReference type="Pfam" id="PF00488">
    <property type="entry name" value="MutS_V"/>
    <property type="match status" value="1"/>
</dbReference>
<dbReference type="PIRSF" id="PIRSF037677">
    <property type="entry name" value="DNA_mis_repair_Msh6"/>
    <property type="match status" value="1"/>
</dbReference>
<dbReference type="SMART" id="SM00534">
    <property type="entry name" value="MUTSac"/>
    <property type="match status" value="1"/>
</dbReference>
<dbReference type="SMART" id="SM00533">
    <property type="entry name" value="MUTSd"/>
    <property type="match status" value="1"/>
</dbReference>
<dbReference type="SUPFAM" id="SSF55271">
    <property type="entry name" value="DNA repair protein MutS, domain I"/>
    <property type="match status" value="1"/>
</dbReference>
<dbReference type="SUPFAM" id="SSF53150">
    <property type="entry name" value="DNA repair protein MutS, domain II"/>
    <property type="match status" value="1"/>
</dbReference>
<dbReference type="SUPFAM" id="SSF48334">
    <property type="entry name" value="DNA repair protein MutS, domain III"/>
    <property type="match status" value="1"/>
</dbReference>
<dbReference type="SUPFAM" id="SSF52540">
    <property type="entry name" value="P-loop containing nucleoside triphosphate hydrolases"/>
    <property type="match status" value="1"/>
</dbReference>
<dbReference type="PROSITE" id="PS00486">
    <property type="entry name" value="DNA_MISMATCH_REPAIR_2"/>
    <property type="match status" value="1"/>
</dbReference>
<proteinExistence type="inferred from homology"/>